<sequence>MALEAQMTLRMFVLVAMASTVHVLSSSFSEDLGTVPLSKVFRSETRFTLIQSLRALLSRQLEAEVHQPEIGHPGFSDETSSRTGKRGGLGRCIHNCMNSRGGLNFIQCKTMCS</sequence>
<keyword id="KW-0165">Cleavage on pair of basic residues</keyword>
<keyword id="KW-1015">Disulfide bond</keyword>
<keyword id="KW-0964">Secreted</keyword>
<keyword id="KW-0732">Signal</keyword>
<keyword id="KW-0800">Toxin</keyword>
<accession>P0DN60</accession>
<feature type="signal peptide" evidence="1">
    <location>
        <begin position="1"/>
        <end position="21"/>
    </location>
</feature>
<feature type="propeptide" id="PRO_0000435087" evidence="3">
    <location>
        <begin position="22"/>
        <end position="86"/>
    </location>
</feature>
<feature type="peptide" id="PRO_0000435088" description="Teretoxin Tan14.1">
    <location>
        <begin position="87"/>
        <end position="113"/>
    </location>
</feature>
<name>TE1_TERAN</name>
<evidence type="ECO:0000255" key="1"/>
<evidence type="ECO:0000303" key="2">
    <source>
    </source>
</evidence>
<evidence type="ECO:0000305" key="3"/>
<evidence type="ECO:0000305" key="4">
    <source>
    </source>
</evidence>
<reference key="1">
    <citation type="journal article" date="2015" name="Genome Biol. Evol.">
        <title>Molecular diversity and gene evolution of the venom arsenal of Terebridae predatory marine snails.</title>
        <authorList>
            <person name="Gorson J."/>
            <person name="Ramrattan G."/>
            <person name="Verdes A."/>
            <person name="Wright E.M."/>
            <person name="Kantor Y."/>
            <person name="Rajaram Srinivasan R."/>
            <person name="Musunuri R."/>
            <person name="Packer D."/>
            <person name="Albano G."/>
            <person name="Qiu W.G."/>
            <person name="Holford M."/>
        </authorList>
    </citation>
    <scope>NUCLEOTIDE SEQUENCE [MRNA]</scope>
    <source>
        <tissue>Venom duct</tissue>
    </source>
</reference>
<organism>
    <name type="scientific">Terebra anilis</name>
    <name type="common">Auger snail</name>
    <name type="synonym">Cinguloterebra anilis</name>
    <dbReference type="NCBI Taxonomy" id="553697"/>
    <lineage>
        <taxon>Eukaryota</taxon>
        <taxon>Metazoa</taxon>
        <taxon>Spiralia</taxon>
        <taxon>Lophotrochozoa</taxon>
        <taxon>Mollusca</taxon>
        <taxon>Gastropoda</taxon>
        <taxon>Caenogastropoda</taxon>
        <taxon>Neogastropoda</taxon>
        <taxon>Conoidea</taxon>
        <taxon>Terebridae</taxon>
        <taxon>Terebra</taxon>
    </lineage>
</organism>
<proteinExistence type="inferred from homology"/>
<dbReference type="SMR" id="P0DN60"/>
<dbReference type="GO" id="GO:0005576">
    <property type="term" value="C:extracellular region"/>
    <property type="evidence" value="ECO:0007669"/>
    <property type="project" value="UniProtKB-SubCell"/>
</dbReference>
<dbReference type="GO" id="GO:0090729">
    <property type="term" value="F:toxin activity"/>
    <property type="evidence" value="ECO:0007669"/>
    <property type="project" value="UniProtKB-KW"/>
</dbReference>
<protein>
    <recommendedName>
        <fullName evidence="2">Teretoxin Tan14.1</fullName>
    </recommendedName>
</protein>
<comment type="subcellular location">
    <subcellularLocation>
        <location evidence="4">Secreted</location>
    </subcellularLocation>
</comment>
<comment type="tissue specificity">
    <text evidence="4">Expressed by the venom duct.</text>
</comment>
<comment type="domain">
    <text>The cysteine framework is XIV (C-C-C-C).</text>
</comment>
<comment type="PTM">
    <text evidence="3">Contains 2 disulfide bonds.</text>
</comment>
<comment type="miscellaneous">
    <text evidence="4">Is 88% identical to As14a (AC P0C6S2).</text>
</comment>
<comment type="similarity">
    <text>Belongs to the teretoxin N (TN) superfamily.</text>
</comment>